<organism>
    <name type="scientific">Rattus norvegicus</name>
    <name type="common">Rat</name>
    <dbReference type="NCBI Taxonomy" id="10116"/>
    <lineage>
        <taxon>Eukaryota</taxon>
        <taxon>Metazoa</taxon>
        <taxon>Chordata</taxon>
        <taxon>Craniata</taxon>
        <taxon>Vertebrata</taxon>
        <taxon>Euteleostomi</taxon>
        <taxon>Mammalia</taxon>
        <taxon>Eutheria</taxon>
        <taxon>Euarchontoglires</taxon>
        <taxon>Glires</taxon>
        <taxon>Rodentia</taxon>
        <taxon>Myomorpha</taxon>
        <taxon>Muroidea</taxon>
        <taxon>Muridae</taxon>
        <taxon>Murinae</taxon>
        <taxon>Rattus</taxon>
    </lineage>
</organism>
<feature type="chain" id="PRO_0000417311" description="Calcium channel flower homolog">
    <location>
        <begin position="1"/>
        <end position="171"/>
    </location>
</feature>
<feature type="topological domain" description="Cytoplasmic" evidence="6">
    <location>
        <begin position="1"/>
        <end position="31"/>
    </location>
</feature>
<feature type="transmembrane region" description="Helical" evidence="3">
    <location>
        <begin position="32"/>
        <end position="52"/>
    </location>
</feature>
<feature type="topological domain" description="Extracellular" evidence="6">
    <location>
        <begin position="53"/>
        <end position="56"/>
    </location>
</feature>
<feature type="transmembrane region" description="Helical" evidence="3">
    <location>
        <begin position="57"/>
        <end position="77"/>
    </location>
</feature>
<feature type="topological domain" description="Cytoplasmic" evidence="6">
    <location>
        <begin position="78"/>
        <end position="101"/>
    </location>
</feature>
<feature type="transmembrane region" description="Helical" evidence="3">
    <location>
        <begin position="102"/>
        <end position="122"/>
    </location>
</feature>
<feature type="topological domain" description="Extracellular" evidence="6">
    <location>
        <begin position="123"/>
        <end position="124"/>
    </location>
</feature>
<feature type="transmembrane region" description="Helical" evidence="3">
    <location>
        <begin position="125"/>
        <end position="141"/>
    </location>
</feature>
<feature type="topological domain" description="Cytoplasmic" evidence="6">
    <location>
        <begin position="142"/>
        <end position="171"/>
    </location>
</feature>
<evidence type="ECO:0000250" key="1">
    <source>
        <dbReference type="UniProtKB" id="Q8BG21"/>
    </source>
</evidence>
<evidence type="ECO:0000250" key="2">
    <source>
        <dbReference type="UniProtKB" id="Q9UGQ2"/>
    </source>
</evidence>
<evidence type="ECO:0000255" key="3"/>
<evidence type="ECO:0000269" key="4">
    <source>
    </source>
</evidence>
<evidence type="ECO:0000269" key="5">
    <source>
    </source>
</evidence>
<evidence type="ECO:0000305" key="6"/>
<comment type="function">
    <text evidence="1 2 5">Transmembrane protein which mediates synaptic endocytosis and fitness-based cell culling (By similarity). In response to different stimulus strengths, controls two major modes of synaptic vesicle (SV) retrieval in hippocampal neurons; Clathrin-mediated endocytosis (CME) in response to mild stimulation and activity-dependent bulk endocytosis (ADBE) in response to strong stimulation (PubMed:28414717). In cytotoxic T-lymphoocytes (CTLs) facilitates calcium-dependent endocytosis of cytotoxic granules (CGs) at the immuno synapse (By similarity). Different isoforms work as fitness fingerprints in 'loser' and 'winner' cells and thereby mediate win/lose decisions as part of the cell competition process (By similarity).</text>
</comment>
<comment type="subunit">
    <text evidence="1">Interacts with adaptor protein complex 2 (AP-2).</text>
</comment>
<comment type="subcellular location">
    <subcellularLocation>
        <location evidence="6">Cell membrane</location>
        <topology evidence="6">Multi-pass membrane protein</topology>
    </subcellularLocation>
    <subcellularLocation>
        <location evidence="4 5">Cytoplasmic vesicle</location>
        <location evidence="4 5">Secretory vesicle</location>
        <location evidence="4 5">Synaptic vesicle</location>
    </subcellularLocation>
    <subcellularLocation>
        <location evidence="5">Golgi apparatus</location>
    </subcellularLocation>
    <subcellularLocation>
        <location evidence="1">Vesicle</location>
    </subcellularLocation>
    <text evidence="1 5">Enriched in synaptic vesicles at the presynpatic vesicles (PubMed:28414717). Detected in the Golgi apparatus of cultured hippocampal neurons (PubMed:28414717). In cytotoxic T-lymphoocytes, localizes to intracellular vesicles that move to the immuno synapse (By similarity).</text>
</comment>
<comment type="tissue specificity">
    <text evidence="4 5">Expressed in calyces in the brain (at protein level) (PubMed:22813738, PubMed:28414717). Detected in cultured hippocampal neurons (at protein level) (PubMed:28414717).</text>
</comment>
<comment type="disruption phenotype">
    <text evidence="5">Knockdown in cultured hippocampal neurons impairs Clathrin-mediated endocytosis (CME) in response to mild stimulation (200 action potentials at 20 Hz) and activity-dependent bulk endocytosis (ADBE) in response to strong stimulation (1,600 action potentials delivered at 80 Hz).</text>
</comment>
<comment type="similarity">
    <text evidence="6">Belongs to the calcium channel flower family.</text>
</comment>
<keyword id="KW-1003">Cell membrane</keyword>
<keyword id="KW-0968">Cytoplasmic vesicle</keyword>
<keyword id="KW-0333">Golgi apparatus</keyword>
<keyword id="KW-0472">Membrane</keyword>
<keyword id="KW-1185">Reference proteome</keyword>
<keyword id="KW-0770">Synapse</keyword>
<keyword id="KW-0812">Transmembrane</keyword>
<keyword id="KW-1133">Transmembrane helix</keyword>
<accession>D4A9I3</accession>
<reference key="1">
    <citation type="journal article" date="2004" name="Nature">
        <title>Genome sequence of the Brown Norway rat yields insights into mammalian evolution.</title>
        <authorList>
            <person name="Gibbs R.A."/>
            <person name="Weinstock G.M."/>
            <person name="Metzker M.L."/>
            <person name="Muzny D.M."/>
            <person name="Sodergren E.J."/>
            <person name="Scherer S."/>
            <person name="Scott G."/>
            <person name="Steffen D."/>
            <person name="Worley K.C."/>
            <person name="Burch P.E."/>
            <person name="Okwuonu G."/>
            <person name="Hines S."/>
            <person name="Lewis L."/>
            <person name="Deramo C."/>
            <person name="Delgado O."/>
            <person name="Dugan-Rocha S."/>
            <person name="Miner G."/>
            <person name="Morgan M."/>
            <person name="Hawes A."/>
            <person name="Gill R."/>
            <person name="Holt R.A."/>
            <person name="Adams M.D."/>
            <person name="Amanatides P.G."/>
            <person name="Baden-Tillson H."/>
            <person name="Barnstead M."/>
            <person name="Chin S."/>
            <person name="Evans C.A."/>
            <person name="Ferriera S."/>
            <person name="Fosler C."/>
            <person name="Glodek A."/>
            <person name="Gu Z."/>
            <person name="Jennings D."/>
            <person name="Kraft C.L."/>
            <person name="Nguyen T."/>
            <person name="Pfannkoch C.M."/>
            <person name="Sitter C."/>
            <person name="Sutton G.G."/>
            <person name="Venter J.C."/>
            <person name="Woodage T."/>
            <person name="Smith D."/>
            <person name="Lee H.-M."/>
            <person name="Gustafson E."/>
            <person name="Cahill P."/>
            <person name="Kana A."/>
            <person name="Doucette-Stamm L."/>
            <person name="Weinstock K."/>
            <person name="Fechtel K."/>
            <person name="Weiss R.B."/>
            <person name="Dunn D.M."/>
            <person name="Green E.D."/>
            <person name="Blakesley R.W."/>
            <person name="Bouffard G.G."/>
            <person name="De Jong P.J."/>
            <person name="Osoegawa K."/>
            <person name="Zhu B."/>
            <person name="Marra M."/>
            <person name="Schein J."/>
            <person name="Bosdet I."/>
            <person name="Fjell C."/>
            <person name="Jones S."/>
            <person name="Krzywinski M."/>
            <person name="Mathewson C."/>
            <person name="Siddiqui A."/>
            <person name="Wye N."/>
            <person name="McPherson J."/>
            <person name="Zhao S."/>
            <person name="Fraser C.M."/>
            <person name="Shetty J."/>
            <person name="Shatsman S."/>
            <person name="Geer K."/>
            <person name="Chen Y."/>
            <person name="Abramzon S."/>
            <person name="Nierman W.C."/>
            <person name="Havlak P.H."/>
            <person name="Chen R."/>
            <person name="Durbin K.J."/>
            <person name="Egan A."/>
            <person name="Ren Y."/>
            <person name="Song X.-Z."/>
            <person name="Li B."/>
            <person name="Liu Y."/>
            <person name="Qin X."/>
            <person name="Cawley S."/>
            <person name="Cooney A.J."/>
            <person name="D'Souza L.M."/>
            <person name="Martin K."/>
            <person name="Wu J.Q."/>
            <person name="Gonzalez-Garay M.L."/>
            <person name="Jackson A.R."/>
            <person name="Kalafus K.J."/>
            <person name="McLeod M.P."/>
            <person name="Milosavljevic A."/>
            <person name="Virk D."/>
            <person name="Volkov A."/>
            <person name="Wheeler D.A."/>
            <person name="Zhang Z."/>
            <person name="Bailey J.A."/>
            <person name="Eichler E.E."/>
            <person name="Tuzun E."/>
            <person name="Birney E."/>
            <person name="Mongin E."/>
            <person name="Ureta-Vidal A."/>
            <person name="Woodwark C."/>
            <person name="Zdobnov E."/>
            <person name="Bork P."/>
            <person name="Suyama M."/>
            <person name="Torrents D."/>
            <person name="Alexandersson M."/>
            <person name="Trask B.J."/>
            <person name="Young J.M."/>
            <person name="Huang H."/>
            <person name="Wang H."/>
            <person name="Xing H."/>
            <person name="Daniels S."/>
            <person name="Gietzen D."/>
            <person name="Schmidt J."/>
            <person name="Stevens K."/>
            <person name="Vitt U."/>
            <person name="Wingrove J."/>
            <person name="Camara F."/>
            <person name="Mar Alba M."/>
            <person name="Abril J.F."/>
            <person name="Guigo R."/>
            <person name="Smit A."/>
            <person name="Dubchak I."/>
            <person name="Rubin E.M."/>
            <person name="Couronne O."/>
            <person name="Poliakov A."/>
            <person name="Huebner N."/>
            <person name="Ganten D."/>
            <person name="Goesele C."/>
            <person name="Hummel O."/>
            <person name="Kreitler T."/>
            <person name="Lee Y.-A."/>
            <person name="Monti J."/>
            <person name="Schulz H."/>
            <person name="Zimdahl H."/>
            <person name="Himmelbauer H."/>
            <person name="Lehrach H."/>
            <person name="Jacob H.J."/>
            <person name="Bromberg S."/>
            <person name="Gullings-Handley J."/>
            <person name="Jensen-Seaman M.I."/>
            <person name="Kwitek A.E."/>
            <person name="Lazar J."/>
            <person name="Pasko D."/>
            <person name="Tonellato P.J."/>
            <person name="Twigger S."/>
            <person name="Ponting C.P."/>
            <person name="Duarte J.M."/>
            <person name="Rice S."/>
            <person name="Goodstadt L."/>
            <person name="Beatson S.A."/>
            <person name="Emes R.D."/>
            <person name="Winter E.E."/>
            <person name="Webber C."/>
            <person name="Brandt P."/>
            <person name="Nyakatura G."/>
            <person name="Adetobi M."/>
            <person name="Chiaromonte F."/>
            <person name="Elnitski L."/>
            <person name="Eswara P."/>
            <person name="Hardison R.C."/>
            <person name="Hou M."/>
            <person name="Kolbe D."/>
            <person name="Makova K."/>
            <person name="Miller W."/>
            <person name="Nekrutenko A."/>
            <person name="Riemer C."/>
            <person name="Schwartz S."/>
            <person name="Taylor J."/>
            <person name="Yang S."/>
            <person name="Zhang Y."/>
            <person name="Lindpaintner K."/>
            <person name="Andrews T.D."/>
            <person name="Caccamo M."/>
            <person name="Clamp M."/>
            <person name="Clarke L."/>
            <person name="Curwen V."/>
            <person name="Durbin R.M."/>
            <person name="Eyras E."/>
            <person name="Searle S.M."/>
            <person name="Cooper G.M."/>
            <person name="Batzoglou S."/>
            <person name="Brudno M."/>
            <person name="Sidow A."/>
            <person name="Stone E.A."/>
            <person name="Payseur B.A."/>
            <person name="Bourque G."/>
            <person name="Lopez-Otin C."/>
            <person name="Puente X.S."/>
            <person name="Chakrabarti K."/>
            <person name="Chatterji S."/>
            <person name="Dewey C."/>
            <person name="Pachter L."/>
            <person name="Bray N."/>
            <person name="Yap V.B."/>
            <person name="Caspi A."/>
            <person name="Tesler G."/>
            <person name="Pevzner P.A."/>
            <person name="Haussler D."/>
            <person name="Roskin K.M."/>
            <person name="Baertsch R."/>
            <person name="Clawson H."/>
            <person name="Furey T.S."/>
            <person name="Hinrichs A.S."/>
            <person name="Karolchik D."/>
            <person name="Kent W.J."/>
            <person name="Rosenbloom K.R."/>
            <person name="Trumbower H."/>
            <person name="Weirauch M."/>
            <person name="Cooper D.N."/>
            <person name="Stenson P.D."/>
            <person name="Ma B."/>
            <person name="Brent M."/>
            <person name="Arumugam M."/>
            <person name="Shteynberg D."/>
            <person name="Copley R.R."/>
            <person name="Taylor M.S."/>
            <person name="Riethman H."/>
            <person name="Mudunuri U."/>
            <person name="Peterson J."/>
            <person name="Guyer M."/>
            <person name="Felsenfeld A."/>
            <person name="Old S."/>
            <person name="Mockrin S."/>
            <person name="Collins F.S."/>
        </authorList>
    </citation>
    <scope>NUCLEOTIDE SEQUENCE [LARGE SCALE GENOMIC DNA]</scope>
    <source>
        <strain>Brown Norway</strain>
    </source>
</reference>
<reference key="2">
    <citation type="submission" date="2005-09" db="EMBL/GenBank/DDBJ databases">
        <authorList>
            <person name="Mural R.J."/>
            <person name="Adams M.D."/>
            <person name="Myers E.W."/>
            <person name="Smith H.O."/>
            <person name="Venter J.C."/>
        </authorList>
    </citation>
    <scope>NUCLEOTIDE SEQUENCE [LARGE SCALE GENOMIC DNA]</scope>
    <source>
        <strain>Brown Norway</strain>
    </source>
</reference>
<reference key="3">
    <citation type="journal article" date="2012" name="Cell Rep.">
        <title>Voltage-dependent calcium channels at the plasma membrane, but not vesicular channels, couple exocytosis to endocytosis.</title>
        <authorList>
            <person name="Xue L."/>
            <person name="Zhang Z."/>
            <person name="McNeil B.D."/>
            <person name="Luo F."/>
            <person name="Wu X.S."/>
            <person name="Sheng J."/>
            <person name="Shin W."/>
            <person name="Wu L.G."/>
        </authorList>
    </citation>
    <scope>SUBCELLULAR LOCATION</scope>
    <scope>TISSUE SPECIFICITY</scope>
</reference>
<reference key="4">
    <citation type="journal article" date="2017" name="PLoS Biol.">
        <title>A Ca2+ channel differentially regulates Clathrin-mediated and activity-dependent bulk endocytosis.</title>
        <authorList>
            <person name="Yao C.K."/>
            <person name="Liu Y.T."/>
            <person name="Lee I.C."/>
            <person name="Wang Y.T."/>
            <person name="Wu P.Y."/>
        </authorList>
    </citation>
    <scope>FUNCTION</scope>
    <scope>SUBCELLULAR LOCATION</scope>
    <scope>TISSUE SPECIFICITY</scope>
    <scope>DISRUPTION PHENOTYPE</scope>
</reference>
<protein>
    <recommendedName>
        <fullName>Calcium channel flower homolog</fullName>
    </recommendedName>
    <alternativeName>
        <fullName>Calcium channel flower domain-containing protein 1</fullName>
    </alternativeName>
</protein>
<proteinExistence type="evidence at protein level"/>
<dbReference type="EMBL" id="AABR03025033">
    <property type="status" value="NOT_ANNOTATED_CDS"/>
    <property type="molecule type" value="Genomic_DNA"/>
</dbReference>
<dbReference type="EMBL" id="CH474001">
    <property type="protein sequence ID" value="EDL93448.1"/>
    <property type="molecule type" value="Genomic_DNA"/>
</dbReference>
<dbReference type="RefSeq" id="NP_001100031.1">
    <property type="nucleotide sequence ID" value="NM_001106561.1"/>
</dbReference>
<dbReference type="RefSeq" id="XP_006233818.1">
    <property type="nucleotide sequence ID" value="XM_006233756.5"/>
</dbReference>
<dbReference type="FunCoup" id="D4A9I3">
    <property type="interactions" value="1761"/>
</dbReference>
<dbReference type="STRING" id="10116.ENSRNOP00000007677"/>
<dbReference type="PhosphoSitePlus" id="D4A9I3"/>
<dbReference type="PaxDb" id="10116-ENSRNOP00000007677"/>
<dbReference type="PeptideAtlas" id="D4A9I3"/>
<dbReference type="GeneID" id="296599"/>
<dbReference type="KEGG" id="rno:296599"/>
<dbReference type="UCSC" id="RGD:1311501">
    <property type="organism name" value="rat"/>
</dbReference>
<dbReference type="AGR" id="RGD:1311501"/>
<dbReference type="CTD" id="11094"/>
<dbReference type="RGD" id="1311501">
    <property type="gene designation" value="Cacfd1"/>
</dbReference>
<dbReference type="VEuPathDB" id="HostDB:ENSRNOG00000005840"/>
<dbReference type="eggNOG" id="KOG4085">
    <property type="taxonomic scope" value="Eukaryota"/>
</dbReference>
<dbReference type="HOGENOM" id="CLU_108196_2_0_1"/>
<dbReference type="InParanoid" id="D4A9I3"/>
<dbReference type="OrthoDB" id="9934994at2759"/>
<dbReference type="PhylomeDB" id="D4A9I3"/>
<dbReference type="TreeFam" id="TF105629"/>
<dbReference type="PRO" id="PR:D4A9I3"/>
<dbReference type="Proteomes" id="UP000002494">
    <property type="component" value="Chromosome 3"/>
</dbReference>
<dbReference type="Proteomes" id="UP000234681">
    <property type="component" value="Chromosome 3"/>
</dbReference>
<dbReference type="Bgee" id="ENSRNOG00000005840">
    <property type="expression patterns" value="Expressed in pancreas and 18 other cell types or tissues"/>
</dbReference>
<dbReference type="GO" id="GO:0005794">
    <property type="term" value="C:Golgi apparatus"/>
    <property type="evidence" value="ECO:0007669"/>
    <property type="project" value="UniProtKB-SubCell"/>
</dbReference>
<dbReference type="GO" id="GO:0005886">
    <property type="term" value="C:plasma membrane"/>
    <property type="evidence" value="ECO:0007669"/>
    <property type="project" value="UniProtKB-SubCell"/>
</dbReference>
<dbReference type="GO" id="GO:0008021">
    <property type="term" value="C:synaptic vesicle"/>
    <property type="evidence" value="ECO:0007669"/>
    <property type="project" value="UniProtKB-SubCell"/>
</dbReference>
<dbReference type="GO" id="GO:0016192">
    <property type="term" value="P:vesicle-mediated transport"/>
    <property type="evidence" value="ECO:0000318"/>
    <property type="project" value="GO_Central"/>
</dbReference>
<dbReference type="InterPro" id="IPR019365">
    <property type="entry name" value="TVP18/Ca-channel_flower"/>
</dbReference>
<dbReference type="PANTHER" id="PTHR13314">
    <property type="entry name" value="CALCIUM CHANNEL FLOWER HOMOLOG"/>
    <property type="match status" value="1"/>
</dbReference>
<dbReference type="PANTHER" id="PTHR13314:SF2">
    <property type="entry name" value="CALCIUM CHANNEL FLOWER HOMOLOG"/>
    <property type="match status" value="1"/>
</dbReference>
<dbReference type="Pfam" id="PF10233">
    <property type="entry name" value="Cg6151-P"/>
    <property type="match status" value="1"/>
</dbReference>
<dbReference type="SMART" id="SM01077">
    <property type="entry name" value="Cg6151-P"/>
    <property type="match status" value="1"/>
</dbReference>
<gene>
    <name type="primary">Cacfd1</name>
</gene>
<name>FLOWR_RAT</name>
<sequence>MSGSVAAGAAAGPVPPAQEEGMTWWYRWLCRLAGVLGAVSCAISGLFNCVTIHPLNIAAGVWMIMNAFILLLCEAPFCCQFVEFANTVAEKVDRLRSWQKAVFYCGMAIVPIVMSLTLTTLLGNAIAFATGVLYGLSALGKKGDAISYARIQQQRQQADEEKLAETFEGEL</sequence>